<proteinExistence type="inferred from homology"/>
<feature type="chain" id="PRO_1000013376" description="Large ribosomal subunit protein bL34">
    <location>
        <begin position="1"/>
        <end position="47"/>
    </location>
</feature>
<reference key="1">
    <citation type="journal article" date="2005" name="J. Bacteriol.">
        <title>Swine and poultry pathogens: the complete genome sequences of two strains of Mycoplasma hyopneumoniae and a strain of Mycoplasma synoviae.</title>
        <authorList>
            <person name="Vasconcelos A.T.R."/>
            <person name="Ferreira H.B."/>
            <person name="Bizarro C.V."/>
            <person name="Bonatto S.L."/>
            <person name="Carvalho M.O."/>
            <person name="Pinto P.M."/>
            <person name="Almeida D.F."/>
            <person name="Almeida L.G.P."/>
            <person name="Almeida R."/>
            <person name="Alves-Junior L."/>
            <person name="Assuncao E.N."/>
            <person name="Azevedo V.A.C."/>
            <person name="Bogo M.R."/>
            <person name="Brigido M.M."/>
            <person name="Brocchi M."/>
            <person name="Burity H.A."/>
            <person name="Camargo A.A."/>
            <person name="Camargo S.S."/>
            <person name="Carepo M.S."/>
            <person name="Carraro D.M."/>
            <person name="de Mattos Cascardo J.C."/>
            <person name="Castro L.A."/>
            <person name="Cavalcanti G."/>
            <person name="Chemale G."/>
            <person name="Collevatti R.G."/>
            <person name="Cunha C.W."/>
            <person name="Dallagiovanna B."/>
            <person name="Dambros B.P."/>
            <person name="Dellagostin O.A."/>
            <person name="Falcao C."/>
            <person name="Fantinatti-Garboggini F."/>
            <person name="Felipe M.S.S."/>
            <person name="Fiorentin L."/>
            <person name="Franco G.R."/>
            <person name="Freitas N.S.A."/>
            <person name="Frias D."/>
            <person name="Grangeiro T.B."/>
            <person name="Grisard E.C."/>
            <person name="Guimaraes C.T."/>
            <person name="Hungria M."/>
            <person name="Jardim S.N."/>
            <person name="Krieger M.A."/>
            <person name="Laurino J.P."/>
            <person name="Lima L.F.A."/>
            <person name="Lopes M.I."/>
            <person name="Loreto E.L.S."/>
            <person name="Madeira H.M.F."/>
            <person name="Manfio G.P."/>
            <person name="Maranhao A.Q."/>
            <person name="Martinkovics C.T."/>
            <person name="Medeiros S.R.B."/>
            <person name="Moreira M.A.M."/>
            <person name="Neiva M."/>
            <person name="Ramalho-Neto C.E."/>
            <person name="Nicolas M.F."/>
            <person name="Oliveira S.C."/>
            <person name="Paixao R.F.C."/>
            <person name="Pedrosa F.O."/>
            <person name="Pena S.D.J."/>
            <person name="Pereira M."/>
            <person name="Pereira-Ferrari L."/>
            <person name="Piffer I."/>
            <person name="Pinto L.S."/>
            <person name="Potrich D.P."/>
            <person name="Salim A.C.M."/>
            <person name="Santos F.R."/>
            <person name="Schmitt R."/>
            <person name="Schneider M.P.C."/>
            <person name="Schrank A."/>
            <person name="Schrank I.S."/>
            <person name="Schuck A.F."/>
            <person name="Seuanez H.N."/>
            <person name="Silva D.W."/>
            <person name="Silva R."/>
            <person name="Silva S.C."/>
            <person name="Soares C.M.A."/>
            <person name="Souza K.R.L."/>
            <person name="Souza R.C."/>
            <person name="Staats C.C."/>
            <person name="Steffens M.B.R."/>
            <person name="Teixeira S.M.R."/>
            <person name="Urmenyi T.P."/>
            <person name="Vainstein M.H."/>
            <person name="Zuccherato L.W."/>
            <person name="Simpson A.J.G."/>
            <person name="Zaha A."/>
        </authorList>
    </citation>
    <scope>NUCLEOTIDE SEQUENCE [LARGE SCALE GENOMIC DNA]</scope>
    <source>
        <strain>J / ATCC 25934 / NCTC 10110</strain>
    </source>
</reference>
<comment type="similarity">
    <text evidence="1">Belongs to the bacterial ribosomal protein bL34 family.</text>
</comment>
<keyword id="KW-0687">Ribonucleoprotein</keyword>
<keyword id="KW-0689">Ribosomal protein</keyword>
<protein>
    <recommendedName>
        <fullName evidence="1">Large ribosomal subunit protein bL34</fullName>
    </recommendedName>
    <alternativeName>
        <fullName evidence="2">50S ribosomal protein L34</fullName>
    </alternativeName>
</protein>
<dbReference type="EMBL" id="AE017243">
    <property type="protein sequence ID" value="AAZ44759.1"/>
    <property type="molecule type" value="Genomic_DNA"/>
</dbReference>
<dbReference type="RefSeq" id="WP_011206529.1">
    <property type="nucleotide sequence ID" value="NC_007295.1"/>
</dbReference>
<dbReference type="SMR" id="Q4A912"/>
<dbReference type="GeneID" id="41334980"/>
<dbReference type="KEGG" id="mhj:MHJ_0676"/>
<dbReference type="eggNOG" id="COG0230">
    <property type="taxonomic scope" value="Bacteria"/>
</dbReference>
<dbReference type="HOGENOM" id="CLU_129938_2_0_14"/>
<dbReference type="Proteomes" id="UP000000548">
    <property type="component" value="Chromosome"/>
</dbReference>
<dbReference type="GO" id="GO:1990904">
    <property type="term" value="C:ribonucleoprotein complex"/>
    <property type="evidence" value="ECO:0007669"/>
    <property type="project" value="UniProtKB-KW"/>
</dbReference>
<dbReference type="GO" id="GO:0005840">
    <property type="term" value="C:ribosome"/>
    <property type="evidence" value="ECO:0007669"/>
    <property type="project" value="UniProtKB-KW"/>
</dbReference>
<dbReference type="GO" id="GO:0003735">
    <property type="term" value="F:structural constituent of ribosome"/>
    <property type="evidence" value="ECO:0007669"/>
    <property type="project" value="InterPro"/>
</dbReference>
<dbReference type="GO" id="GO:0006412">
    <property type="term" value="P:translation"/>
    <property type="evidence" value="ECO:0007669"/>
    <property type="project" value="UniProtKB-UniRule"/>
</dbReference>
<dbReference type="FunFam" id="1.10.287.3980:FF:000001">
    <property type="entry name" value="Mitochondrial ribosomal protein L34"/>
    <property type="match status" value="1"/>
</dbReference>
<dbReference type="Gene3D" id="1.10.287.3980">
    <property type="match status" value="1"/>
</dbReference>
<dbReference type="HAMAP" id="MF_00391">
    <property type="entry name" value="Ribosomal_bL34"/>
    <property type="match status" value="1"/>
</dbReference>
<dbReference type="InterPro" id="IPR000271">
    <property type="entry name" value="Ribosomal_bL34"/>
</dbReference>
<dbReference type="InterPro" id="IPR020939">
    <property type="entry name" value="Ribosomal_bL34_CS"/>
</dbReference>
<dbReference type="NCBIfam" id="TIGR01030">
    <property type="entry name" value="rpmH_bact"/>
    <property type="match status" value="1"/>
</dbReference>
<dbReference type="PANTHER" id="PTHR14503:SF4">
    <property type="entry name" value="LARGE RIBOSOMAL SUBUNIT PROTEIN BL34M"/>
    <property type="match status" value="1"/>
</dbReference>
<dbReference type="PANTHER" id="PTHR14503">
    <property type="entry name" value="MITOCHONDRIAL RIBOSOMAL PROTEIN 34 FAMILY MEMBER"/>
    <property type="match status" value="1"/>
</dbReference>
<dbReference type="Pfam" id="PF00468">
    <property type="entry name" value="Ribosomal_L34"/>
    <property type="match status" value="1"/>
</dbReference>
<dbReference type="PROSITE" id="PS00784">
    <property type="entry name" value="RIBOSOMAL_L34"/>
    <property type="match status" value="1"/>
</dbReference>
<accession>Q4A912</accession>
<organism>
    <name type="scientific">Mesomycoplasma hyopneumoniae (strain J / ATCC 25934 / NCTC 10110)</name>
    <name type="common">Mycoplasma hyopneumoniae</name>
    <dbReference type="NCBI Taxonomy" id="262719"/>
    <lineage>
        <taxon>Bacteria</taxon>
        <taxon>Bacillati</taxon>
        <taxon>Mycoplasmatota</taxon>
        <taxon>Mycoplasmoidales</taxon>
        <taxon>Metamycoplasmataceae</taxon>
        <taxon>Mesomycoplasma</taxon>
    </lineage>
</organism>
<evidence type="ECO:0000255" key="1">
    <source>
        <dbReference type="HAMAP-Rule" id="MF_00391"/>
    </source>
</evidence>
<evidence type="ECO:0000305" key="2"/>
<name>RL34_MESHJ</name>
<sequence>MKRTYQPNKRKHLKTHGFRARMSTADGRKILAARRAKGRKRLTVSDK</sequence>
<gene>
    <name evidence="1" type="primary">rpmH</name>
    <name type="ordered locus">MHJ_0676</name>
</gene>